<gene>
    <name evidence="3" type="primary">NOP7</name>
    <name type="synonym">RRP13</name>
    <name type="synonym">YPH1</name>
    <name type="ORF">SCY_2318</name>
</gene>
<dbReference type="EMBL" id="AAFW02000102">
    <property type="protein sequence ID" value="EDN61693.1"/>
    <property type="molecule type" value="Genomic_DNA"/>
</dbReference>
<dbReference type="EMDB" id="EMD-10841"/>
<dbReference type="EMDB" id="EMD-10842"/>
<dbReference type="SMR" id="A6ZV85"/>
<dbReference type="IntAct" id="A6ZV85">
    <property type="interactions" value="2"/>
</dbReference>
<dbReference type="MINT" id="A6ZV85"/>
<dbReference type="HOGENOM" id="CLU_019619_1_1_1"/>
<dbReference type="Proteomes" id="UP000007060">
    <property type="component" value="Unassembled WGS sequence"/>
</dbReference>
<dbReference type="GO" id="GO:0005654">
    <property type="term" value="C:nucleoplasm"/>
    <property type="evidence" value="ECO:0007669"/>
    <property type="project" value="UniProtKB-SubCell"/>
</dbReference>
<dbReference type="GO" id="GO:0070545">
    <property type="term" value="C:PeBoW complex"/>
    <property type="evidence" value="ECO:0007669"/>
    <property type="project" value="TreeGrafter"/>
</dbReference>
<dbReference type="GO" id="GO:0030687">
    <property type="term" value="C:preribosome, large subunit precursor"/>
    <property type="evidence" value="ECO:0007669"/>
    <property type="project" value="UniProtKB-UniRule"/>
</dbReference>
<dbReference type="GO" id="GO:0043021">
    <property type="term" value="F:ribonucleoprotein complex binding"/>
    <property type="evidence" value="ECO:0007669"/>
    <property type="project" value="UniProtKB-UniRule"/>
</dbReference>
<dbReference type="GO" id="GO:0003723">
    <property type="term" value="F:RNA binding"/>
    <property type="evidence" value="ECO:0007669"/>
    <property type="project" value="TreeGrafter"/>
</dbReference>
<dbReference type="GO" id="GO:0000466">
    <property type="term" value="P:maturation of 5.8S rRNA from tricistronic rRNA transcript (SSU-rRNA, 5.8S rRNA, LSU-rRNA)"/>
    <property type="evidence" value="ECO:0007669"/>
    <property type="project" value="UniProtKB-UniRule"/>
</dbReference>
<dbReference type="GO" id="GO:0000463">
    <property type="term" value="P:maturation of LSU-rRNA from tricistronic rRNA transcript (SSU-rRNA, 5.8S rRNA, LSU-rRNA)"/>
    <property type="evidence" value="ECO:0007669"/>
    <property type="project" value="UniProtKB-UniRule"/>
</dbReference>
<dbReference type="CDD" id="cd17709">
    <property type="entry name" value="BRCT_pescadillo_like"/>
    <property type="match status" value="1"/>
</dbReference>
<dbReference type="FunFam" id="3.40.50.10190:FF:000067">
    <property type="entry name" value="Pescadillo homolog"/>
    <property type="match status" value="1"/>
</dbReference>
<dbReference type="Gene3D" id="3.40.50.10190">
    <property type="entry name" value="BRCT domain"/>
    <property type="match status" value="1"/>
</dbReference>
<dbReference type="HAMAP" id="MF_03028">
    <property type="entry name" value="Pescadillo"/>
    <property type="match status" value="1"/>
</dbReference>
<dbReference type="InterPro" id="IPR001357">
    <property type="entry name" value="BRCT_dom"/>
</dbReference>
<dbReference type="InterPro" id="IPR036420">
    <property type="entry name" value="BRCT_dom_sf"/>
</dbReference>
<dbReference type="InterPro" id="IPR010613">
    <property type="entry name" value="PES"/>
</dbReference>
<dbReference type="PANTHER" id="PTHR12221">
    <property type="entry name" value="PESCADILLO - RELATED"/>
    <property type="match status" value="1"/>
</dbReference>
<dbReference type="PANTHER" id="PTHR12221:SF6">
    <property type="entry name" value="PESCADILLO HOMOLOG"/>
    <property type="match status" value="1"/>
</dbReference>
<dbReference type="Pfam" id="PF16589">
    <property type="entry name" value="BRCT_2"/>
    <property type="match status" value="1"/>
</dbReference>
<dbReference type="Pfam" id="PF06732">
    <property type="entry name" value="Pescadillo_N"/>
    <property type="match status" value="1"/>
</dbReference>
<dbReference type="SMART" id="SM00292">
    <property type="entry name" value="BRCT"/>
    <property type="match status" value="1"/>
</dbReference>
<dbReference type="SUPFAM" id="SSF52113">
    <property type="entry name" value="BRCT domain"/>
    <property type="match status" value="1"/>
</dbReference>
<dbReference type="PROSITE" id="PS50172">
    <property type="entry name" value="BRCT"/>
    <property type="match status" value="1"/>
</dbReference>
<evidence type="ECO:0000250" key="1"/>
<evidence type="ECO:0000250" key="2">
    <source>
        <dbReference type="UniProtKB" id="P53261"/>
    </source>
</evidence>
<evidence type="ECO:0000255" key="3">
    <source>
        <dbReference type="HAMAP-Rule" id="MF_03028"/>
    </source>
</evidence>
<evidence type="ECO:0000256" key="4">
    <source>
        <dbReference type="SAM" id="MobiDB-lite"/>
    </source>
</evidence>
<organism>
    <name type="scientific">Saccharomyces cerevisiae (strain YJM789)</name>
    <name type="common">Baker's yeast</name>
    <dbReference type="NCBI Taxonomy" id="307796"/>
    <lineage>
        <taxon>Eukaryota</taxon>
        <taxon>Fungi</taxon>
        <taxon>Dikarya</taxon>
        <taxon>Ascomycota</taxon>
        <taxon>Saccharomycotina</taxon>
        <taxon>Saccharomycetes</taxon>
        <taxon>Saccharomycetales</taxon>
        <taxon>Saccharomycetaceae</taxon>
        <taxon>Saccharomyces</taxon>
    </lineage>
</organism>
<sequence>MRIKKKNTRGNARNFITRSQAVRKLQVSLADFRRLCIFKGIYPREPRNKKKANKGSTAPTTFYYAKDIQYLMHEPVLAKFREHKTFARKLTRALGRGEVSSAKRLEENRDSYTLDHIIKERYPSFPDAIRDIDDALNMLFLFSNLPSTNQVSSKIINDAQKICNQWLAYVAKERLVRKVFVSIKGVYYQANIKGEEVRWLVPFKFPENIPSDVDFRIMLTFLEFYSTLLHFVLYKLYTDSGLIYPPKLDLKKDKIISGLSSYILESRQEDSLLKLDPTEIEEDVKVESLDASTLKSALNADEANTDETEKEEEQEKKQEKEQEKEQNEETELDTFEDNNKNKGDILIQPSKYDSPVASLFSAFVFYVSREVPIDILEFLILSCGGNVISEAAMDQIENKKDIDMSKVTHQIVDRPVLKNKVAGRTYIQPQWIFDCINKGELVPANKYLPGEALPPHLSPWGDAIGYDPTAPVEEGEEEESESESESEDQVEEEDQEVVAGEEDDDDDEELQAQKELELEAQGIKYSETSEADKDVNKSKNKKRKVDEEEEEKKLKMIMMSNKQKKLYKKMKYSNAKKEEQAENLKKKKKQIAKQKAKLNKLDSKK</sequence>
<reference key="1">
    <citation type="journal article" date="2007" name="Proc. Natl. Acad. Sci. U.S.A.">
        <title>Genome sequencing and comparative analysis of Saccharomyces cerevisiae strain YJM789.</title>
        <authorList>
            <person name="Wei W."/>
            <person name="McCusker J.H."/>
            <person name="Hyman R.W."/>
            <person name="Jones T."/>
            <person name="Ning Y."/>
            <person name="Cao Z."/>
            <person name="Gu Z."/>
            <person name="Bruno D."/>
            <person name="Miranda M."/>
            <person name="Nguyen M."/>
            <person name="Wilhelmy J."/>
            <person name="Komp C."/>
            <person name="Tamse R."/>
            <person name="Wang X."/>
            <person name="Jia P."/>
            <person name="Luedi P."/>
            <person name="Oefner P.J."/>
            <person name="David L."/>
            <person name="Dietrich F.S."/>
            <person name="Li Y."/>
            <person name="Davis R.W."/>
            <person name="Steinmetz L.M."/>
        </authorList>
    </citation>
    <scope>NUCLEOTIDE SEQUENCE [LARGE SCALE GENOMIC DNA]</scope>
    <source>
        <strain>YJM789</strain>
    </source>
</reference>
<protein>
    <recommendedName>
        <fullName evidence="3">Pescadillo homolog</fullName>
    </recommendedName>
    <alternativeName>
        <fullName>Nucleolar protein 7</fullName>
    </alternativeName>
    <alternativeName>
        <fullName>Ribosomal RNA-processing protein 13</fullName>
    </alternativeName>
</protein>
<accession>A6ZV85</accession>
<proteinExistence type="inferred from homology"/>
<feature type="chain" id="PRO_0000370506" description="Pescadillo homolog">
    <location>
        <begin position="1"/>
        <end position="605"/>
    </location>
</feature>
<feature type="domain" description="BRCT" evidence="3">
    <location>
        <begin position="355"/>
        <end position="449"/>
    </location>
</feature>
<feature type="region of interest" description="Sufficient for interaction with ERB1" evidence="1">
    <location>
        <begin position="51"/>
        <end position="484"/>
    </location>
</feature>
<feature type="region of interest" description="Disordered" evidence="4">
    <location>
        <begin position="297"/>
        <end position="342"/>
    </location>
</feature>
<feature type="region of interest" description="Disordered" evidence="4">
    <location>
        <begin position="459"/>
        <end position="605"/>
    </location>
</feature>
<feature type="coiled-coil region" evidence="3">
    <location>
        <begin position="294"/>
        <end position="342"/>
    </location>
</feature>
<feature type="coiled-coil region" evidence="3">
    <location>
        <begin position="530"/>
        <end position="605"/>
    </location>
</feature>
<feature type="compositionally biased region" description="Acidic residues" evidence="4">
    <location>
        <begin position="303"/>
        <end position="312"/>
    </location>
</feature>
<feature type="compositionally biased region" description="Basic and acidic residues" evidence="4">
    <location>
        <begin position="313"/>
        <end position="327"/>
    </location>
</feature>
<feature type="compositionally biased region" description="Acidic residues" evidence="4">
    <location>
        <begin position="473"/>
        <end position="510"/>
    </location>
</feature>
<feature type="compositionally biased region" description="Basic residues" evidence="4">
    <location>
        <begin position="562"/>
        <end position="571"/>
    </location>
</feature>
<feature type="compositionally biased region" description="Basic and acidic residues" evidence="4">
    <location>
        <begin position="575"/>
        <end position="584"/>
    </location>
</feature>
<feature type="compositionally biased region" description="Basic residues" evidence="4">
    <location>
        <begin position="585"/>
        <end position="598"/>
    </location>
</feature>
<feature type="modified residue" description="Phosphoserine" evidence="2">
    <location>
        <position position="288"/>
    </location>
</feature>
<feature type="modified residue" description="Phosphothreonine" evidence="2">
    <location>
        <position position="308"/>
    </location>
</feature>
<name>PESC_YEAS7</name>
<comment type="function">
    <text evidence="3">Component of the NOP7 complex, which is required for maturation of the 25S and 5.8S ribosomal RNAs and formation of the 60S ribosome.</text>
</comment>
<comment type="subunit">
    <text evidence="3">Component of the NOP7 complex, composed of ERB1, NOP7 and YTM1. The complex is held together by ERB1, which interacts with NOP7 via its N-terminal domain and with YTM1 via a high-affinity interaction between the seven-bladed beta-propeller domains of the 2 proteins. The NOP7 complex associates with the 66S pre-ribosome.</text>
</comment>
<comment type="subcellular location">
    <subcellularLocation>
        <location evidence="3">Nucleus</location>
        <location evidence="3">Nucleolus</location>
    </subcellularLocation>
    <subcellularLocation>
        <location evidence="3">Nucleus</location>
        <location evidence="3">Nucleoplasm</location>
    </subcellularLocation>
</comment>
<comment type="similarity">
    <text evidence="3">Belongs to the pescadillo family.</text>
</comment>
<keyword id="KW-0175">Coiled coil</keyword>
<keyword id="KW-0539">Nucleus</keyword>
<keyword id="KW-0597">Phosphoprotein</keyword>
<keyword id="KW-0690">Ribosome biogenesis</keyword>
<keyword id="KW-0698">rRNA processing</keyword>